<proteinExistence type="evidence at protein level"/>
<comment type="function">
    <text evidence="5 6">Accessory subunit of the proton-transporting vacuolar (V)-ATPase protein pump, which is required for luminal acidification of secretory vesicles.</text>
</comment>
<comment type="subunit">
    <text evidence="1 6">Accessory component of the multisubunit proton-transporting vacuolar (V)-ATPase protein pump (By similarity). May interact with ATP6AP2 (PubMed:29995586).</text>
</comment>
<comment type="subcellular location">
    <subcellularLocation>
        <location evidence="1">Endoplasmic reticulum membrane</location>
        <topology evidence="3">Single-pass type I membrane protein</topology>
    </subcellularLocation>
</comment>
<comment type="similarity">
    <text evidence="8">Belongs to the vacuolar ATPase subunit S1 family.</text>
</comment>
<organism evidence="11">
    <name type="scientific">Drosophila melanogaster</name>
    <name type="common">Fruit fly</name>
    <dbReference type="NCBI Taxonomy" id="7227"/>
    <lineage>
        <taxon>Eukaryota</taxon>
        <taxon>Metazoa</taxon>
        <taxon>Ecdysozoa</taxon>
        <taxon>Arthropoda</taxon>
        <taxon>Hexapoda</taxon>
        <taxon>Insecta</taxon>
        <taxon>Pterygota</taxon>
        <taxon>Neoptera</taxon>
        <taxon>Endopterygota</taxon>
        <taxon>Diptera</taxon>
        <taxon>Brachycera</taxon>
        <taxon>Muscomorpha</taxon>
        <taxon>Ephydroidea</taxon>
        <taxon>Drosophilidae</taxon>
        <taxon>Drosophila</taxon>
        <taxon>Sophophora</taxon>
    </lineage>
</organism>
<reference evidence="11" key="1">
    <citation type="journal article" date="2000" name="Science">
        <title>The genome sequence of Drosophila melanogaster.</title>
        <authorList>
            <person name="Adams M.D."/>
            <person name="Celniker S.E."/>
            <person name="Holt R.A."/>
            <person name="Evans C.A."/>
            <person name="Gocayne J.D."/>
            <person name="Amanatides P.G."/>
            <person name="Scherer S.E."/>
            <person name="Li P.W."/>
            <person name="Hoskins R.A."/>
            <person name="Galle R.F."/>
            <person name="George R.A."/>
            <person name="Lewis S.E."/>
            <person name="Richards S."/>
            <person name="Ashburner M."/>
            <person name="Henderson S.N."/>
            <person name="Sutton G.G."/>
            <person name="Wortman J.R."/>
            <person name="Yandell M.D."/>
            <person name="Zhang Q."/>
            <person name="Chen L.X."/>
            <person name="Brandon R.C."/>
            <person name="Rogers Y.-H.C."/>
            <person name="Blazej R.G."/>
            <person name="Champe M."/>
            <person name="Pfeiffer B.D."/>
            <person name="Wan K.H."/>
            <person name="Doyle C."/>
            <person name="Baxter E.G."/>
            <person name="Helt G."/>
            <person name="Nelson C.R."/>
            <person name="Miklos G.L.G."/>
            <person name="Abril J.F."/>
            <person name="Agbayani A."/>
            <person name="An H.-J."/>
            <person name="Andrews-Pfannkoch C."/>
            <person name="Baldwin D."/>
            <person name="Ballew R.M."/>
            <person name="Basu A."/>
            <person name="Baxendale J."/>
            <person name="Bayraktaroglu L."/>
            <person name="Beasley E.M."/>
            <person name="Beeson K.Y."/>
            <person name="Benos P.V."/>
            <person name="Berman B.P."/>
            <person name="Bhandari D."/>
            <person name="Bolshakov S."/>
            <person name="Borkova D."/>
            <person name="Botchan M.R."/>
            <person name="Bouck J."/>
            <person name="Brokstein P."/>
            <person name="Brottier P."/>
            <person name="Burtis K.C."/>
            <person name="Busam D.A."/>
            <person name="Butler H."/>
            <person name="Cadieu E."/>
            <person name="Center A."/>
            <person name="Chandra I."/>
            <person name="Cherry J.M."/>
            <person name="Cawley S."/>
            <person name="Dahlke C."/>
            <person name="Davenport L.B."/>
            <person name="Davies P."/>
            <person name="de Pablos B."/>
            <person name="Delcher A."/>
            <person name="Deng Z."/>
            <person name="Mays A.D."/>
            <person name="Dew I."/>
            <person name="Dietz S.M."/>
            <person name="Dodson K."/>
            <person name="Doup L.E."/>
            <person name="Downes M."/>
            <person name="Dugan-Rocha S."/>
            <person name="Dunkov B.C."/>
            <person name="Dunn P."/>
            <person name="Durbin K.J."/>
            <person name="Evangelista C.C."/>
            <person name="Ferraz C."/>
            <person name="Ferriera S."/>
            <person name="Fleischmann W."/>
            <person name="Fosler C."/>
            <person name="Gabrielian A.E."/>
            <person name="Garg N.S."/>
            <person name="Gelbart W.M."/>
            <person name="Glasser K."/>
            <person name="Glodek A."/>
            <person name="Gong F."/>
            <person name="Gorrell J.H."/>
            <person name="Gu Z."/>
            <person name="Guan P."/>
            <person name="Harris M."/>
            <person name="Harris N.L."/>
            <person name="Harvey D.A."/>
            <person name="Heiman T.J."/>
            <person name="Hernandez J.R."/>
            <person name="Houck J."/>
            <person name="Hostin D."/>
            <person name="Houston K.A."/>
            <person name="Howland T.J."/>
            <person name="Wei M.-H."/>
            <person name="Ibegwam C."/>
            <person name="Jalali M."/>
            <person name="Kalush F."/>
            <person name="Karpen G.H."/>
            <person name="Ke Z."/>
            <person name="Kennison J.A."/>
            <person name="Ketchum K.A."/>
            <person name="Kimmel B.E."/>
            <person name="Kodira C.D."/>
            <person name="Kraft C.L."/>
            <person name="Kravitz S."/>
            <person name="Kulp D."/>
            <person name="Lai Z."/>
            <person name="Lasko P."/>
            <person name="Lei Y."/>
            <person name="Levitsky A.A."/>
            <person name="Li J.H."/>
            <person name="Li Z."/>
            <person name="Liang Y."/>
            <person name="Lin X."/>
            <person name="Liu X."/>
            <person name="Mattei B."/>
            <person name="McIntosh T.C."/>
            <person name="McLeod M.P."/>
            <person name="McPherson D."/>
            <person name="Merkulov G."/>
            <person name="Milshina N.V."/>
            <person name="Mobarry C."/>
            <person name="Morris J."/>
            <person name="Moshrefi A."/>
            <person name="Mount S.M."/>
            <person name="Moy M."/>
            <person name="Murphy B."/>
            <person name="Murphy L."/>
            <person name="Muzny D.M."/>
            <person name="Nelson D.L."/>
            <person name="Nelson D.R."/>
            <person name="Nelson K.A."/>
            <person name="Nixon K."/>
            <person name="Nusskern D.R."/>
            <person name="Pacleb J.M."/>
            <person name="Palazzolo M."/>
            <person name="Pittman G.S."/>
            <person name="Pan S."/>
            <person name="Pollard J."/>
            <person name="Puri V."/>
            <person name="Reese M.G."/>
            <person name="Reinert K."/>
            <person name="Remington K."/>
            <person name="Saunders R.D.C."/>
            <person name="Scheeler F."/>
            <person name="Shen H."/>
            <person name="Shue B.C."/>
            <person name="Siden-Kiamos I."/>
            <person name="Simpson M."/>
            <person name="Skupski M.P."/>
            <person name="Smith T.J."/>
            <person name="Spier E."/>
            <person name="Spradling A.C."/>
            <person name="Stapleton M."/>
            <person name="Strong R."/>
            <person name="Sun E."/>
            <person name="Svirskas R."/>
            <person name="Tector C."/>
            <person name="Turner R."/>
            <person name="Venter E."/>
            <person name="Wang A.H."/>
            <person name="Wang X."/>
            <person name="Wang Z.-Y."/>
            <person name="Wassarman D.A."/>
            <person name="Weinstock G.M."/>
            <person name="Weissenbach J."/>
            <person name="Williams S.M."/>
            <person name="Woodage T."/>
            <person name="Worley K.C."/>
            <person name="Wu D."/>
            <person name="Yang S."/>
            <person name="Yao Q.A."/>
            <person name="Ye J."/>
            <person name="Yeh R.-F."/>
            <person name="Zaveri J.S."/>
            <person name="Zhan M."/>
            <person name="Zhang G."/>
            <person name="Zhao Q."/>
            <person name="Zheng L."/>
            <person name="Zheng X.H."/>
            <person name="Zhong F.N."/>
            <person name="Zhong W."/>
            <person name="Zhou X."/>
            <person name="Zhu S.C."/>
            <person name="Zhu X."/>
            <person name="Smith H.O."/>
            <person name="Gibbs R.A."/>
            <person name="Myers E.W."/>
            <person name="Rubin G.M."/>
            <person name="Venter J.C."/>
        </authorList>
    </citation>
    <scope>NUCLEOTIDE SEQUENCE [LARGE SCALE GENOMIC DNA]</scope>
    <source>
        <strain evidence="11">Berkeley</strain>
    </source>
</reference>
<reference evidence="11" key="2">
    <citation type="journal article" date="2002" name="Genome Biol.">
        <title>Annotation of the Drosophila melanogaster euchromatic genome: a systematic review.</title>
        <authorList>
            <person name="Misra S."/>
            <person name="Crosby M.A."/>
            <person name="Mungall C.J."/>
            <person name="Matthews B.B."/>
            <person name="Campbell K.S."/>
            <person name="Hradecky P."/>
            <person name="Huang Y."/>
            <person name="Kaminker J.S."/>
            <person name="Millburn G.H."/>
            <person name="Prochnik S.E."/>
            <person name="Smith C.D."/>
            <person name="Tupy J.L."/>
            <person name="Whitfield E.J."/>
            <person name="Bayraktaroglu L."/>
            <person name="Berman B.P."/>
            <person name="Bettencourt B.R."/>
            <person name="Celniker S.E."/>
            <person name="de Grey A.D.N.J."/>
            <person name="Drysdale R.A."/>
            <person name="Harris N.L."/>
            <person name="Richter J."/>
            <person name="Russo S."/>
            <person name="Schroeder A.J."/>
            <person name="Shu S.Q."/>
            <person name="Stapleton M."/>
            <person name="Yamada C."/>
            <person name="Ashburner M."/>
            <person name="Gelbart W.M."/>
            <person name="Rubin G.M."/>
            <person name="Lewis S.E."/>
        </authorList>
    </citation>
    <scope>GENOME REANNOTATION</scope>
    <source>
        <strain evidence="11">Berkeley</strain>
    </source>
</reference>
<reference evidence="9" key="3">
    <citation type="submission" date="2003-01" db="EMBL/GenBank/DDBJ databases">
        <authorList>
            <person name="Stapleton M."/>
            <person name="Brokstein P."/>
            <person name="Hong L."/>
            <person name="Agbayani A."/>
            <person name="Carlson J."/>
            <person name="Champe M."/>
            <person name="Chavez C."/>
            <person name="Dorsett V."/>
            <person name="Dresnek D."/>
            <person name="Farfan D."/>
            <person name="Frise E."/>
            <person name="George R."/>
            <person name="Gonzalez M."/>
            <person name="Guarin H."/>
            <person name="Kronmiller B."/>
            <person name="Li P."/>
            <person name="Liao G."/>
            <person name="Miranda A."/>
            <person name="Mungall C.J."/>
            <person name="Nunoo J."/>
            <person name="Pacleb J."/>
            <person name="Paragas V."/>
            <person name="Park S."/>
            <person name="Patel S."/>
            <person name="Phouanenavong S."/>
            <person name="Wan K."/>
            <person name="Yu C."/>
            <person name="Lewis S.E."/>
            <person name="Rubin G.M."/>
            <person name="Celniker S."/>
        </authorList>
    </citation>
    <scope>NUCLEOTIDE SEQUENCE [LARGE SCALE MRNA]</scope>
    <source>
        <strain evidence="9">Berkeley</strain>
        <tissue evidence="9">Embryo</tissue>
    </source>
</reference>
<reference evidence="8" key="4">
    <citation type="journal article" date="2017" name="J. Exp. Med.">
        <title>Mutations in the X-linked ATP6AP2 cause a glycosylation disorder with autophagic defects.</title>
        <authorList>
            <person name="Rujano M.A."/>
            <person name="Cannata Serio M."/>
            <person name="Panasyuk G."/>
            <person name="Peanne R."/>
            <person name="Reunert J."/>
            <person name="Rymen D."/>
            <person name="Hauser V."/>
            <person name="Park J.H."/>
            <person name="Freisinger P."/>
            <person name="Souche E."/>
            <person name="Guida M.C."/>
            <person name="Maier E.M."/>
            <person name="Wada Y."/>
            <person name="Jaeger S."/>
            <person name="Krogan N.J."/>
            <person name="Kretz O."/>
            <person name="Nobre S."/>
            <person name="Garcia P."/>
            <person name="Quelhas D."/>
            <person name="Bird T.D."/>
            <person name="Raskind W.H."/>
            <person name="Schwake M."/>
            <person name="Duvet S."/>
            <person name="Foulquier F."/>
            <person name="Matthijs G."/>
            <person name="Marquardt T."/>
            <person name="Simons M."/>
        </authorList>
    </citation>
    <scope>FUNCTION</scope>
</reference>
<reference evidence="8" key="5">
    <citation type="journal article" date="2018" name="Mol. Biol. Cell">
        <title>ATP6AP2 functions as a V-ATPase assembly factor in the endoplasmic reticulum.</title>
        <authorList>
            <person name="Guida M.C."/>
            <person name="Hermle T."/>
            <person name="Graham L.A."/>
            <person name="Hauser V."/>
            <person name="Ryan M."/>
            <person name="Stevens T.H."/>
            <person name="Simons M."/>
        </authorList>
    </citation>
    <scope>FUNCTION</scope>
    <scope>INTERACTION WITH ATP6AP2</scope>
</reference>
<evidence type="ECO:0000250" key="1">
    <source>
        <dbReference type="UniProtKB" id="Q15904"/>
    </source>
</evidence>
<evidence type="ECO:0000250" key="2">
    <source>
        <dbReference type="UniProtKB" id="Q9R1Q9"/>
    </source>
</evidence>
<evidence type="ECO:0000255" key="3"/>
<evidence type="ECO:0000255" key="4">
    <source>
        <dbReference type="PROSITE-ProRule" id="PRU00498"/>
    </source>
</evidence>
<evidence type="ECO:0000269" key="5">
    <source>
    </source>
</evidence>
<evidence type="ECO:0000269" key="6">
    <source>
    </source>
</evidence>
<evidence type="ECO:0000303" key="7">
    <source>
    </source>
</evidence>
<evidence type="ECO:0000305" key="8"/>
<evidence type="ECO:0000312" key="9">
    <source>
        <dbReference type="EMBL" id="AAO25036.1"/>
    </source>
</evidence>
<evidence type="ECO:0000312" key="10">
    <source>
        <dbReference type="FlyBase" id="FBgn0262515"/>
    </source>
</evidence>
<evidence type="ECO:0000312" key="11">
    <source>
        <dbReference type="Proteomes" id="UP000000803"/>
    </source>
</evidence>
<gene>
    <name evidence="10" type="primary">VhaAC45</name>
    <name evidence="7 10" type="synonym">ATP6AP1</name>
    <name evidence="10" type="ORF">CG8029</name>
</gene>
<feature type="signal peptide" evidence="3">
    <location>
        <begin position="1"/>
        <end position="17"/>
    </location>
</feature>
<feature type="chain" id="PRO_5015098718" description="V-type proton ATPase subunit S1" evidence="3">
    <location>
        <begin position="18"/>
        <end position="379"/>
    </location>
</feature>
<feature type="propeptide" id="PRO_0000454044" evidence="2">
    <location>
        <begin position="18"/>
        <end status="unknown"/>
    </location>
</feature>
<feature type="topological domain" description="Lumenal" evidence="8">
    <location>
        <begin position="18"/>
        <end position="333"/>
    </location>
</feature>
<feature type="transmembrane region" description="Helical" evidence="3">
    <location>
        <begin position="334"/>
        <end position="354"/>
    </location>
</feature>
<feature type="topological domain" description="Cytoplasmic" evidence="8">
    <location>
        <begin position="355"/>
        <end position="379"/>
    </location>
</feature>
<feature type="glycosylation site" description="N-linked (GlcNAc...) asparagine" evidence="4">
    <location>
        <position position="225"/>
    </location>
</feature>
<feature type="glycosylation site" description="N-linked (GlcNAc...) asparagine" evidence="4">
    <location>
        <position position="284"/>
    </location>
</feature>
<feature type="disulfide bond" evidence="1">
    <location>
        <begin position="282"/>
        <end position="326"/>
    </location>
</feature>
<dbReference type="EMBL" id="AE013599">
    <property type="protein sequence ID" value="AAF58965.1"/>
    <property type="molecule type" value="Genomic_DNA"/>
</dbReference>
<dbReference type="EMBL" id="AE013599">
    <property type="protein sequence ID" value="AAF58966.2"/>
    <property type="molecule type" value="Genomic_DNA"/>
</dbReference>
<dbReference type="EMBL" id="BT003279">
    <property type="protein sequence ID" value="AAO25036.1"/>
    <property type="molecule type" value="mRNA"/>
</dbReference>
<dbReference type="RefSeq" id="NP_610470.1">
    <property type="nucleotide sequence ID" value="NM_136626.5"/>
</dbReference>
<dbReference type="RefSeq" id="NP_724770.1">
    <property type="nucleotide sequence ID" value="NM_165665.2"/>
</dbReference>
<dbReference type="FunCoup" id="Q7JR49">
    <property type="interactions" value="293"/>
</dbReference>
<dbReference type="IntAct" id="Q7JR49">
    <property type="interactions" value="13"/>
</dbReference>
<dbReference type="STRING" id="7227.FBpp0087668"/>
<dbReference type="TCDB" id="8.A.107.1.3">
    <property type="family name" value="the v-type atpase assembly factor, atp6ap1 (atp6ap1) family"/>
</dbReference>
<dbReference type="GlyCosmos" id="Q7JR49">
    <property type="glycosylation" value="2 sites, No reported glycans"/>
</dbReference>
<dbReference type="GlyGen" id="Q7JR49">
    <property type="glycosylation" value="3 sites"/>
</dbReference>
<dbReference type="SwissPalm" id="Q7JR49"/>
<dbReference type="PaxDb" id="7227-FBpp0087668"/>
<dbReference type="DNASU" id="35944"/>
<dbReference type="EnsemblMetazoa" id="FBtr0088587">
    <property type="protein sequence ID" value="FBpp0087668"/>
    <property type="gene ID" value="FBgn0262515"/>
</dbReference>
<dbReference type="EnsemblMetazoa" id="FBtr0088588">
    <property type="protein sequence ID" value="FBpp0087669"/>
    <property type="gene ID" value="FBgn0262515"/>
</dbReference>
<dbReference type="GeneID" id="35944"/>
<dbReference type="KEGG" id="dme:Dmel_CG8029"/>
<dbReference type="UCSC" id="CG8029-RA">
    <property type="organism name" value="d. melanogaster"/>
</dbReference>
<dbReference type="AGR" id="FB:FBgn0262515"/>
<dbReference type="CTD" id="35944"/>
<dbReference type="FlyBase" id="FBgn0262515">
    <property type="gene designation" value="VhaAC45"/>
</dbReference>
<dbReference type="VEuPathDB" id="VectorBase:FBgn0262515"/>
<dbReference type="eggNOG" id="KOG3868">
    <property type="taxonomic scope" value="Eukaryota"/>
</dbReference>
<dbReference type="GeneTree" id="ENSGT00940000170675"/>
<dbReference type="HOGENOM" id="CLU_039408_1_0_1"/>
<dbReference type="InParanoid" id="Q7JR49"/>
<dbReference type="OMA" id="AFGDSWD"/>
<dbReference type="OrthoDB" id="19852at2759"/>
<dbReference type="PhylomeDB" id="Q7JR49"/>
<dbReference type="Reactome" id="R-DME-77387">
    <property type="pathway name" value="Insulin receptor recycling"/>
</dbReference>
<dbReference type="Reactome" id="R-DME-917977">
    <property type="pathway name" value="Transferrin endocytosis and recycling"/>
</dbReference>
<dbReference type="Reactome" id="R-DME-983712">
    <property type="pathway name" value="Ion channel transport"/>
</dbReference>
<dbReference type="BioGRID-ORCS" id="35944">
    <property type="hits" value="0 hits in 3 CRISPR screens"/>
</dbReference>
<dbReference type="ChiTaRS" id="VhaAC45">
    <property type="organism name" value="fly"/>
</dbReference>
<dbReference type="GenomeRNAi" id="35944"/>
<dbReference type="PRO" id="PR:Q7JR49"/>
<dbReference type="Proteomes" id="UP000000803">
    <property type="component" value="Chromosome 2R"/>
</dbReference>
<dbReference type="Bgee" id="FBgn0262515">
    <property type="expression patterns" value="Expressed in second segment of antenna (Drosophila) and 272 other cell types or tissues"/>
</dbReference>
<dbReference type="GO" id="GO:0005789">
    <property type="term" value="C:endoplasmic reticulum membrane"/>
    <property type="evidence" value="ECO:0007669"/>
    <property type="project" value="UniProtKB-SubCell"/>
</dbReference>
<dbReference type="GO" id="GO:0033176">
    <property type="term" value="C:proton-transporting V-type ATPase complex"/>
    <property type="evidence" value="ECO:0000318"/>
    <property type="project" value="GO_Central"/>
</dbReference>
<dbReference type="GO" id="GO:0016471">
    <property type="term" value="C:vacuolar proton-transporting V-type ATPase complex"/>
    <property type="evidence" value="ECO:0000315"/>
    <property type="project" value="UniProtKB"/>
</dbReference>
<dbReference type="GO" id="GO:0001671">
    <property type="term" value="F:ATPase activator activity"/>
    <property type="evidence" value="ECO:0000318"/>
    <property type="project" value="GO_Central"/>
</dbReference>
<dbReference type="GO" id="GO:0030641">
    <property type="term" value="P:regulation of cellular pH"/>
    <property type="evidence" value="ECO:0000318"/>
    <property type="project" value="GO_Central"/>
</dbReference>
<dbReference type="GO" id="GO:0070072">
    <property type="term" value="P:vacuolar proton-transporting V-type ATPase complex assembly"/>
    <property type="evidence" value="ECO:0000316"/>
    <property type="project" value="UniProtKB"/>
</dbReference>
<dbReference type="InterPro" id="IPR008388">
    <property type="entry name" value="Ac45_acc_su"/>
</dbReference>
<dbReference type="InterPro" id="IPR046756">
    <property type="entry name" value="VAS1/VOA1_TM"/>
</dbReference>
<dbReference type="InterPro" id="IPR046755">
    <property type="entry name" value="VAS1_LD"/>
</dbReference>
<dbReference type="PANTHER" id="PTHR12471:SF7">
    <property type="entry name" value="V-TYPE PROTON ATPASE SUBUNIT S1"/>
    <property type="match status" value="1"/>
</dbReference>
<dbReference type="PANTHER" id="PTHR12471">
    <property type="entry name" value="VACUOLAR ATP SYNTHASE SUBUNIT S1"/>
    <property type="match status" value="1"/>
</dbReference>
<dbReference type="Pfam" id="PF20520">
    <property type="entry name" value="Ac45-VOA1_TM"/>
    <property type="match status" value="1"/>
</dbReference>
<dbReference type="Pfam" id="PF05827">
    <property type="entry name" value="VAS1_LD"/>
    <property type="match status" value="1"/>
</dbReference>
<protein>
    <recommendedName>
        <fullName evidence="8">V-type proton ATPase subunit S1</fullName>
    </recommendedName>
    <alternativeName>
        <fullName evidence="10">Vacuolar H(+) ATPase AC45 accessory subunit</fullName>
    </alternativeName>
</protein>
<keyword id="KW-1015">Disulfide bond</keyword>
<keyword id="KW-0256">Endoplasmic reticulum</keyword>
<keyword id="KW-0325">Glycoprotein</keyword>
<keyword id="KW-0472">Membrane</keyword>
<keyword id="KW-1185">Reference proteome</keyword>
<keyword id="KW-0732">Signal</keyword>
<keyword id="KW-0812">Transmembrane</keyword>
<keyword id="KW-1133">Transmembrane helix</keyword>
<name>VAS1_DROME</name>
<accession>Q7JR49</accession>
<sequence>MLWKSLIALCVIGAAVAEQTPVFLWGANSVAKPSLKTVSQVEFAEQLAALLEDHMVVAFEENGLSSKDFLCSNSQAQSCYAQLQGVSPKTYYTSVENPSEALRSVAAKREHNSIDASGKLTTPAKCAVGTALFVTFEDAAESREASLESHDAAIAAISKQFECKVAYLYLAAPSTAPVVQRRTRRDTAATTGGIMWKSTNQFQIFYTALLYNGNPITVTDLKLTNSSSTKLSVVMDTSVADKPITFDVVYNGGYFSLSNLVYDNNNFRSSGVNAPTTFSYSCGNLTLESAAVNNMYNTLSFKSLQLQAPFDGTYKEDFPFGDSWDCVGFVTPGILMGLFVVALLLVIMFVGVCWMMDINTMDRFDDPKGKTITINAAAE</sequence>